<gene>
    <name evidence="1" type="primary">rplM</name>
    <name type="ordered locus">LHK_02778</name>
</gene>
<protein>
    <recommendedName>
        <fullName evidence="1">Large ribosomal subunit protein uL13</fullName>
    </recommendedName>
    <alternativeName>
        <fullName evidence="2">50S ribosomal protein L13</fullName>
    </alternativeName>
</protein>
<name>RL13_LARHH</name>
<sequence length="142" mass="16132">MKTFSAKPHEVKRDWFVVDATDKVLGRLAAEIARRLRGKHKPEYTPHVDTGDYIVVVNADKLRVTGNKALDKKYYRHSGYPGGIYERTFTELQNEFPERVLEKAVKGMLPKGPLGYAMIKKLKVYAGAEHPHTAQQPKALEI</sequence>
<keyword id="KW-1185">Reference proteome</keyword>
<keyword id="KW-0687">Ribonucleoprotein</keyword>
<keyword id="KW-0689">Ribosomal protein</keyword>
<reference key="1">
    <citation type="journal article" date="2009" name="PLoS Genet.">
        <title>The complete genome and proteome of Laribacter hongkongensis reveal potential mechanisms for adaptations to different temperatures and habitats.</title>
        <authorList>
            <person name="Woo P.C.Y."/>
            <person name="Lau S.K.P."/>
            <person name="Tse H."/>
            <person name="Teng J.L.L."/>
            <person name="Curreem S.O."/>
            <person name="Tsang A.K.L."/>
            <person name="Fan R.Y.Y."/>
            <person name="Wong G.K.M."/>
            <person name="Huang Y."/>
            <person name="Loman N.J."/>
            <person name="Snyder L.A.S."/>
            <person name="Cai J.J."/>
            <person name="Huang J.-D."/>
            <person name="Mak W."/>
            <person name="Pallen M.J."/>
            <person name="Lok S."/>
            <person name="Yuen K.-Y."/>
        </authorList>
    </citation>
    <scope>NUCLEOTIDE SEQUENCE [LARGE SCALE GENOMIC DNA]</scope>
    <source>
        <strain>HLHK9</strain>
    </source>
</reference>
<proteinExistence type="inferred from homology"/>
<organism>
    <name type="scientific">Laribacter hongkongensis (strain HLHK9)</name>
    <dbReference type="NCBI Taxonomy" id="557598"/>
    <lineage>
        <taxon>Bacteria</taxon>
        <taxon>Pseudomonadati</taxon>
        <taxon>Pseudomonadota</taxon>
        <taxon>Betaproteobacteria</taxon>
        <taxon>Neisseriales</taxon>
        <taxon>Aquaspirillaceae</taxon>
        <taxon>Laribacter</taxon>
    </lineage>
</organism>
<evidence type="ECO:0000255" key="1">
    <source>
        <dbReference type="HAMAP-Rule" id="MF_01366"/>
    </source>
</evidence>
<evidence type="ECO:0000305" key="2"/>
<comment type="function">
    <text evidence="1">This protein is one of the early assembly proteins of the 50S ribosomal subunit, although it is not seen to bind rRNA by itself. It is important during the early stages of 50S assembly.</text>
</comment>
<comment type="subunit">
    <text evidence="1">Part of the 50S ribosomal subunit.</text>
</comment>
<comment type="similarity">
    <text evidence="1">Belongs to the universal ribosomal protein uL13 family.</text>
</comment>
<dbReference type="EMBL" id="CP001154">
    <property type="protein sequence ID" value="ACO75758.1"/>
    <property type="molecule type" value="Genomic_DNA"/>
</dbReference>
<dbReference type="RefSeq" id="WP_012698221.1">
    <property type="nucleotide sequence ID" value="NC_012559.1"/>
</dbReference>
<dbReference type="SMR" id="C1DDC6"/>
<dbReference type="STRING" id="557598.LHK_02778"/>
<dbReference type="GeneID" id="75109857"/>
<dbReference type="KEGG" id="lhk:LHK_02778"/>
<dbReference type="eggNOG" id="COG0102">
    <property type="taxonomic scope" value="Bacteria"/>
</dbReference>
<dbReference type="HOGENOM" id="CLU_082184_2_2_4"/>
<dbReference type="Proteomes" id="UP000002010">
    <property type="component" value="Chromosome"/>
</dbReference>
<dbReference type="GO" id="GO:0022625">
    <property type="term" value="C:cytosolic large ribosomal subunit"/>
    <property type="evidence" value="ECO:0007669"/>
    <property type="project" value="TreeGrafter"/>
</dbReference>
<dbReference type="GO" id="GO:0003729">
    <property type="term" value="F:mRNA binding"/>
    <property type="evidence" value="ECO:0007669"/>
    <property type="project" value="TreeGrafter"/>
</dbReference>
<dbReference type="GO" id="GO:0003735">
    <property type="term" value="F:structural constituent of ribosome"/>
    <property type="evidence" value="ECO:0007669"/>
    <property type="project" value="InterPro"/>
</dbReference>
<dbReference type="GO" id="GO:0017148">
    <property type="term" value="P:negative regulation of translation"/>
    <property type="evidence" value="ECO:0007669"/>
    <property type="project" value="TreeGrafter"/>
</dbReference>
<dbReference type="GO" id="GO:0006412">
    <property type="term" value="P:translation"/>
    <property type="evidence" value="ECO:0007669"/>
    <property type="project" value="UniProtKB-UniRule"/>
</dbReference>
<dbReference type="CDD" id="cd00392">
    <property type="entry name" value="Ribosomal_L13"/>
    <property type="match status" value="1"/>
</dbReference>
<dbReference type="FunFam" id="3.90.1180.10:FF:000001">
    <property type="entry name" value="50S ribosomal protein L13"/>
    <property type="match status" value="1"/>
</dbReference>
<dbReference type="Gene3D" id="3.90.1180.10">
    <property type="entry name" value="Ribosomal protein L13"/>
    <property type="match status" value="1"/>
</dbReference>
<dbReference type="HAMAP" id="MF_01366">
    <property type="entry name" value="Ribosomal_uL13"/>
    <property type="match status" value="1"/>
</dbReference>
<dbReference type="InterPro" id="IPR005822">
    <property type="entry name" value="Ribosomal_uL13"/>
</dbReference>
<dbReference type="InterPro" id="IPR005823">
    <property type="entry name" value="Ribosomal_uL13_bac-type"/>
</dbReference>
<dbReference type="InterPro" id="IPR036899">
    <property type="entry name" value="Ribosomal_uL13_sf"/>
</dbReference>
<dbReference type="NCBIfam" id="TIGR01066">
    <property type="entry name" value="rplM_bact"/>
    <property type="match status" value="1"/>
</dbReference>
<dbReference type="PANTHER" id="PTHR11545:SF2">
    <property type="entry name" value="LARGE RIBOSOMAL SUBUNIT PROTEIN UL13M"/>
    <property type="match status" value="1"/>
</dbReference>
<dbReference type="PANTHER" id="PTHR11545">
    <property type="entry name" value="RIBOSOMAL PROTEIN L13"/>
    <property type="match status" value="1"/>
</dbReference>
<dbReference type="Pfam" id="PF00572">
    <property type="entry name" value="Ribosomal_L13"/>
    <property type="match status" value="1"/>
</dbReference>
<dbReference type="PIRSF" id="PIRSF002181">
    <property type="entry name" value="Ribosomal_L13"/>
    <property type="match status" value="1"/>
</dbReference>
<dbReference type="SUPFAM" id="SSF52161">
    <property type="entry name" value="Ribosomal protein L13"/>
    <property type="match status" value="1"/>
</dbReference>
<accession>C1DDC6</accession>
<feature type="chain" id="PRO_1000166871" description="Large ribosomal subunit protein uL13">
    <location>
        <begin position="1"/>
        <end position="142"/>
    </location>
</feature>